<keyword id="KW-1204">Blood coagulation cascade activating toxin</keyword>
<keyword id="KW-1015">Disulfide bond</keyword>
<keyword id="KW-0325">Glycoprotein</keyword>
<keyword id="KW-1199">Hemostasis impairing toxin</keyword>
<keyword id="KW-0378">Hydrolase</keyword>
<keyword id="KW-0645">Protease</keyword>
<keyword id="KW-0964">Secreted</keyword>
<keyword id="KW-0720">Serine protease</keyword>
<keyword id="KW-0800">Toxin</keyword>
<evidence type="ECO:0000250" key="1"/>
<evidence type="ECO:0000255" key="2"/>
<evidence type="ECO:0000255" key="3">
    <source>
        <dbReference type="PROSITE-ProRule" id="PRU00274"/>
    </source>
</evidence>
<evidence type="ECO:0000269" key="4">
    <source>
    </source>
</evidence>
<evidence type="ECO:0000269" key="5">
    <source>
    </source>
</evidence>
<evidence type="ECO:0000269" key="6">
    <source>
    </source>
</evidence>
<evidence type="ECO:0000305" key="7"/>
<evidence type="ECO:0000305" key="8">
    <source>
    </source>
</evidence>
<dbReference type="EC" id="3.4.21.-"/>
<dbReference type="EMBL" id="AY954040">
    <property type="protein sequence ID" value="AAX54679.1"/>
    <property type="molecule type" value="mRNA"/>
</dbReference>
<dbReference type="SMR" id="Q58G94"/>
<dbReference type="MEROPS" id="S01.181"/>
<dbReference type="GO" id="GO:0005576">
    <property type="term" value="C:extracellular region"/>
    <property type="evidence" value="ECO:0007669"/>
    <property type="project" value="UniProtKB-SubCell"/>
</dbReference>
<dbReference type="GO" id="GO:0030141">
    <property type="term" value="C:secretory granule"/>
    <property type="evidence" value="ECO:0007669"/>
    <property type="project" value="TreeGrafter"/>
</dbReference>
<dbReference type="GO" id="GO:0004252">
    <property type="term" value="F:serine-type endopeptidase activity"/>
    <property type="evidence" value="ECO:0007669"/>
    <property type="project" value="InterPro"/>
</dbReference>
<dbReference type="GO" id="GO:0090729">
    <property type="term" value="F:toxin activity"/>
    <property type="evidence" value="ECO:0007669"/>
    <property type="project" value="UniProtKB-KW"/>
</dbReference>
<dbReference type="GO" id="GO:0006508">
    <property type="term" value="P:proteolysis"/>
    <property type="evidence" value="ECO:0007669"/>
    <property type="project" value="UniProtKB-KW"/>
</dbReference>
<dbReference type="CDD" id="cd00190">
    <property type="entry name" value="Tryp_SPc"/>
    <property type="match status" value="1"/>
</dbReference>
<dbReference type="FunFam" id="2.40.10.10:FF:000158">
    <property type="entry name" value="Thrombin-like enzyme saxthrombin"/>
    <property type="match status" value="1"/>
</dbReference>
<dbReference type="Gene3D" id="2.40.10.10">
    <property type="entry name" value="Trypsin-like serine proteases"/>
    <property type="match status" value="2"/>
</dbReference>
<dbReference type="InterPro" id="IPR009003">
    <property type="entry name" value="Peptidase_S1_PA"/>
</dbReference>
<dbReference type="InterPro" id="IPR043504">
    <property type="entry name" value="Peptidase_S1_PA_chymotrypsin"/>
</dbReference>
<dbReference type="InterPro" id="IPR001314">
    <property type="entry name" value="Peptidase_S1A"/>
</dbReference>
<dbReference type="InterPro" id="IPR001254">
    <property type="entry name" value="Trypsin_dom"/>
</dbReference>
<dbReference type="InterPro" id="IPR018114">
    <property type="entry name" value="TRYPSIN_HIS"/>
</dbReference>
<dbReference type="PANTHER" id="PTHR24271:SF47">
    <property type="entry name" value="KALLIKREIN-1"/>
    <property type="match status" value="1"/>
</dbReference>
<dbReference type="PANTHER" id="PTHR24271">
    <property type="entry name" value="KALLIKREIN-RELATED"/>
    <property type="match status" value="1"/>
</dbReference>
<dbReference type="Pfam" id="PF00089">
    <property type="entry name" value="Trypsin"/>
    <property type="match status" value="1"/>
</dbReference>
<dbReference type="PRINTS" id="PR00722">
    <property type="entry name" value="CHYMOTRYPSIN"/>
</dbReference>
<dbReference type="SMART" id="SM00020">
    <property type="entry name" value="Tryp_SPc"/>
    <property type="match status" value="1"/>
</dbReference>
<dbReference type="SUPFAM" id="SSF50494">
    <property type="entry name" value="Trypsin-like serine proteases"/>
    <property type="match status" value="1"/>
</dbReference>
<dbReference type="PROSITE" id="PS50240">
    <property type="entry name" value="TRYPSIN_DOM"/>
    <property type="match status" value="1"/>
</dbReference>
<dbReference type="PROSITE" id="PS00134">
    <property type="entry name" value="TRYPSIN_HIS"/>
    <property type="match status" value="1"/>
</dbReference>
<name>VSP21_CRODU</name>
<feature type="chain" id="PRO_5000095392" description="Thrombin-like enzyme gyroxin B2.1">
    <location>
        <begin position="1"/>
        <end position="238"/>
    </location>
</feature>
<feature type="domain" description="Peptidase S1" evidence="3">
    <location>
        <begin position="1"/>
        <end position="229"/>
    </location>
</feature>
<feature type="active site" description="Charge relay system" evidence="1">
    <location>
        <position position="43"/>
    </location>
</feature>
<feature type="active site" description="Charge relay system" evidence="1">
    <location>
        <position position="88"/>
    </location>
</feature>
<feature type="active site" description="Charge relay system" evidence="1">
    <location>
        <position position="184"/>
    </location>
</feature>
<feature type="glycosylation site" description="N-linked (GlcNAc...) asparagine" evidence="2">
    <location>
        <position position="81"/>
    </location>
</feature>
<feature type="disulfide bond" evidence="3">
    <location>
        <begin position="7"/>
        <end position="141"/>
    </location>
</feature>
<feature type="disulfide bond" evidence="3">
    <location>
        <begin position="28"/>
        <end position="44"/>
    </location>
</feature>
<feature type="disulfide bond" evidence="3">
    <location>
        <begin position="78"/>
        <end position="236"/>
    </location>
</feature>
<feature type="disulfide bond" evidence="3">
    <location>
        <begin position="120"/>
        <end position="190"/>
    </location>
</feature>
<feature type="disulfide bond" evidence="3">
    <location>
        <begin position="152"/>
        <end position="169"/>
    </location>
</feature>
<feature type="disulfide bond" evidence="3">
    <location>
        <begin position="180"/>
        <end position="205"/>
    </location>
</feature>
<organism>
    <name type="scientific">Crotalus durissus terrificus</name>
    <name type="common">South American rattlesnake</name>
    <dbReference type="NCBI Taxonomy" id="8732"/>
    <lineage>
        <taxon>Eukaryota</taxon>
        <taxon>Metazoa</taxon>
        <taxon>Chordata</taxon>
        <taxon>Craniata</taxon>
        <taxon>Vertebrata</taxon>
        <taxon>Euteleostomi</taxon>
        <taxon>Lepidosauria</taxon>
        <taxon>Squamata</taxon>
        <taxon>Bifurcata</taxon>
        <taxon>Unidentata</taxon>
        <taxon>Episquamata</taxon>
        <taxon>Toxicofera</taxon>
        <taxon>Serpentes</taxon>
        <taxon>Colubroidea</taxon>
        <taxon>Viperidae</taxon>
        <taxon>Crotalinae</taxon>
        <taxon>Crotalus</taxon>
    </lineage>
</organism>
<protein>
    <recommendedName>
        <fullName>Thrombin-like enzyme gyroxin B2.1</fullName>
        <shortName>SVTLE gyroxin B2.1</shortName>
        <ecNumber>3.4.21.-</ecNumber>
    </recommendedName>
    <alternativeName>
        <fullName>Fibrinogen-clotting enzyme</fullName>
    </alternativeName>
    <alternativeName>
        <fullName>Snake venom serine protease</fullName>
        <shortName>SVSP</shortName>
    </alternativeName>
</protein>
<reference key="1">
    <citation type="journal article" date="2009" name="Toxicon">
        <title>Cloning of serine protease cDNAs from Crotalus durissus terrificus venom gland and expression of a functional Gyroxin homologue in COS-7 cells.</title>
        <authorList>
            <person name="Yonamine C.M."/>
            <person name="Prieto-da-Silva A.R."/>
            <person name="Magalhaes G.S."/>
            <person name="Radis-Baptista G."/>
            <person name="Morganti L."/>
            <person name="Ambiel F.C."/>
            <person name="Chura-Chambi R.M."/>
            <person name="Yamane T."/>
            <person name="Camillo M.A."/>
        </authorList>
    </citation>
    <scope>NUCLEOTIDE SEQUENCE [MRNA]</scope>
    <scope>FUNCTION</scope>
    <source>
        <tissue>Venom gland</tissue>
    </source>
</reference>
<reference key="2">
    <citation type="journal article" date="2001" name="Toxicon">
        <title>Gyroxin fails to modify in vitro release of labelled dopamine and acetylcholine from rat and mouse striatal tissue.</title>
        <authorList>
            <person name="Camillo M.A."/>
            <person name="Arruda Paes P.C."/>
            <person name="Troncone L.R."/>
            <person name="Rogero J.R."/>
        </authorList>
    </citation>
    <scope>FUNCTION</scope>
</reference>
<reference key="3">
    <citation type="journal article" date="2011" name="Toxicon">
        <title>Gyroxin increases blood-brain barrier permeability to Evans blue dye in mice.</title>
        <authorList>
            <person name="Alves da Silva J.A."/>
            <person name="Oliveira K.C."/>
            <person name="Camillo M.A."/>
        </authorList>
    </citation>
    <scope>FUNCTION</scope>
</reference>
<sequence>VIGGDECNINERNFLVALYEYWSQSFLCGGTLINGEWVLTAAHCDRKHILIYVGVHDRSVQFDKEQRRFPKEKYFFNCRNNFTKWDKDIMLIRLNKPVSYSEHIAPLSLPSSPPIVGSVCRVMGWGTIKSPQETLPDVPHCANINLLDYGVCRTAHPQFRLPATSRILCAGVLEGGIDTCHRDSGGPLICNGEFQGIVSWGDGSCAQPDKPALYSKVFDHLDWIQNIIAGSETVNCPS</sequence>
<accession>Q58G94</accession>
<proteinExistence type="evidence at transcript level"/>
<comment type="function">
    <text evidence="1 4 5 6">Thrombin-like snake venom serine protease. Displays a specificity similar to trypsin. Releases only fibrinopeptide A in the conversion of fibrinogen (FGA) to fibrin (By similarity). Shows coagulant, esterase and amidase activities. Reversibly increases the permeability of the blood brain barrier (BBB) in mice. Induces the barrel rotation syndrome in mice, which is manifested by gyroxin-like, rapid rolling motions. This syndrome may be due to its effect on BBB permeability, and certainly also to other actions affecting endogenous substrates present in the endothelium, nervous tissues or blood.</text>
</comment>
<comment type="subunit">
    <text evidence="1">Monomer.</text>
</comment>
<comment type="subcellular location">
    <subcellularLocation>
        <location>Secreted</location>
    </subcellularLocation>
</comment>
<comment type="tissue specificity">
    <text>Expressed by the venom gland.</text>
</comment>
<comment type="miscellaneous">
    <text evidence="8">Negative results: does not have phospholipase activity, does not aggregate platelet, and does not affect the release of the neurotransmitters dopamine and acetylcholine in the nervous system.</text>
</comment>
<comment type="similarity">
    <text evidence="3">Belongs to the peptidase S1 family. Snake venom subfamily.</text>
</comment>
<comment type="caution">
    <text evidence="7">Information taken from PubMed:20637222 and PubMed:11137545 are not linked to a specific sequence. Hence, it is not sure whether the function corresponds to this protein or to a paralog.</text>
</comment>